<accession>A4J5Y5</accession>
<sequence>MMKQISILGSTGSIGRQTLEVVNSFPEELNVVALAAGRNRELFLEQCKAYKPLLVSLQLEEDALWLKEHLIKEKLRPEIRYGLDGLVAVATCHEAVVVVTALSGAIGLVPTCAAIKASKKIALANKETLVAAGQYVTKLAEEYKVEILPVDSEHSAIWQCLHGENRSAIRKIQLTASGGPFRQLNRQELENVTPEMALKHPNWSMGQKITIDSATLMNKGLEVIEAKWLFGVDYDDINVVVHPQSVIHSMVEYGDGSLLAHLGMPDMRIPIQYALSYPERWFNHLPKLNLTELKGLTFEEPDTNRFPSLSLAYQAGKIGGTAPAVLNAANEVAVHAFLAGQIKFMQIPSIVKRTLNEHQFQGSPVLEEILEIDGWAREEANKIIRNC</sequence>
<reference key="1">
    <citation type="submission" date="2007-03" db="EMBL/GenBank/DDBJ databases">
        <title>Complete sequence of Desulfotomaculum reducens MI-1.</title>
        <authorList>
            <consortium name="US DOE Joint Genome Institute"/>
            <person name="Copeland A."/>
            <person name="Lucas S."/>
            <person name="Lapidus A."/>
            <person name="Barry K."/>
            <person name="Detter J.C."/>
            <person name="Glavina del Rio T."/>
            <person name="Hammon N."/>
            <person name="Israni S."/>
            <person name="Dalin E."/>
            <person name="Tice H."/>
            <person name="Pitluck S."/>
            <person name="Sims D."/>
            <person name="Brettin T."/>
            <person name="Bruce D."/>
            <person name="Han C."/>
            <person name="Tapia R."/>
            <person name="Schmutz J."/>
            <person name="Larimer F."/>
            <person name="Land M."/>
            <person name="Hauser L."/>
            <person name="Kyrpides N."/>
            <person name="Kim E."/>
            <person name="Tebo B.M."/>
            <person name="Richardson P."/>
        </authorList>
    </citation>
    <scope>NUCLEOTIDE SEQUENCE [LARGE SCALE GENOMIC DNA]</scope>
    <source>
        <strain>ATCC BAA-1160 / DSM 100696 / MI-1</strain>
    </source>
</reference>
<name>DXR_DESRM</name>
<proteinExistence type="inferred from homology"/>
<feature type="chain" id="PRO_1000071666" description="1-deoxy-D-xylulose 5-phosphate reductoisomerase">
    <location>
        <begin position="1"/>
        <end position="387"/>
    </location>
</feature>
<feature type="binding site" evidence="1">
    <location>
        <position position="11"/>
    </location>
    <ligand>
        <name>NADPH</name>
        <dbReference type="ChEBI" id="CHEBI:57783"/>
    </ligand>
</feature>
<feature type="binding site" evidence="1">
    <location>
        <position position="12"/>
    </location>
    <ligand>
        <name>NADPH</name>
        <dbReference type="ChEBI" id="CHEBI:57783"/>
    </ligand>
</feature>
<feature type="binding site" evidence="1">
    <location>
        <position position="13"/>
    </location>
    <ligand>
        <name>NADPH</name>
        <dbReference type="ChEBI" id="CHEBI:57783"/>
    </ligand>
</feature>
<feature type="binding site" evidence="1">
    <location>
        <position position="14"/>
    </location>
    <ligand>
        <name>NADPH</name>
        <dbReference type="ChEBI" id="CHEBI:57783"/>
    </ligand>
</feature>
<feature type="binding site" evidence="1">
    <location>
        <position position="37"/>
    </location>
    <ligand>
        <name>NADPH</name>
        <dbReference type="ChEBI" id="CHEBI:57783"/>
    </ligand>
</feature>
<feature type="binding site" evidence="1">
    <location>
        <position position="38"/>
    </location>
    <ligand>
        <name>NADPH</name>
        <dbReference type="ChEBI" id="CHEBI:57783"/>
    </ligand>
</feature>
<feature type="binding site" evidence="1">
    <location>
        <position position="39"/>
    </location>
    <ligand>
        <name>NADPH</name>
        <dbReference type="ChEBI" id="CHEBI:57783"/>
    </ligand>
</feature>
<feature type="binding site" evidence="1">
    <location>
        <position position="125"/>
    </location>
    <ligand>
        <name>NADPH</name>
        <dbReference type="ChEBI" id="CHEBI:57783"/>
    </ligand>
</feature>
<feature type="binding site" evidence="1">
    <location>
        <position position="126"/>
    </location>
    <ligand>
        <name>1-deoxy-D-xylulose 5-phosphate</name>
        <dbReference type="ChEBI" id="CHEBI:57792"/>
    </ligand>
</feature>
<feature type="binding site" evidence="1">
    <location>
        <position position="127"/>
    </location>
    <ligand>
        <name>NADPH</name>
        <dbReference type="ChEBI" id="CHEBI:57783"/>
    </ligand>
</feature>
<feature type="binding site" evidence="1">
    <location>
        <position position="151"/>
    </location>
    <ligand>
        <name>Mn(2+)</name>
        <dbReference type="ChEBI" id="CHEBI:29035"/>
    </ligand>
</feature>
<feature type="binding site" evidence="1">
    <location>
        <position position="152"/>
    </location>
    <ligand>
        <name>1-deoxy-D-xylulose 5-phosphate</name>
        <dbReference type="ChEBI" id="CHEBI:57792"/>
    </ligand>
</feature>
<feature type="binding site" evidence="1">
    <location>
        <position position="153"/>
    </location>
    <ligand>
        <name>1-deoxy-D-xylulose 5-phosphate</name>
        <dbReference type="ChEBI" id="CHEBI:57792"/>
    </ligand>
</feature>
<feature type="binding site" evidence="1">
    <location>
        <position position="153"/>
    </location>
    <ligand>
        <name>Mn(2+)</name>
        <dbReference type="ChEBI" id="CHEBI:29035"/>
    </ligand>
</feature>
<feature type="binding site" evidence="1">
    <location>
        <position position="177"/>
    </location>
    <ligand>
        <name>1-deoxy-D-xylulose 5-phosphate</name>
        <dbReference type="ChEBI" id="CHEBI:57792"/>
    </ligand>
</feature>
<feature type="binding site" evidence="1">
    <location>
        <position position="200"/>
    </location>
    <ligand>
        <name>1-deoxy-D-xylulose 5-phosphate</name>
        <dbReference type="ChEBI" id="CHEBI:57792"/>
    </ligand>
</feature>
<feature type="binding site" evidence="1">
    <location>
        <position position="206"/>
    </location>
    <ligand>
        <name>NADPH</name>
        <dbReference type="ChEBI" id="CHEBI:57783"/>
    </ligand>
</feature>
<feature type="binding site" evidence="1">
    <location>
        <position position="213"/>
    </location>
    <ligand>
        <name>1-deoxy-D-xylulose 5-phosphate</name>
        <dbReference type="ChEBI" id="CHEBI:57792"/>
    </ligand>
</feature>
<feature type="binding site" evidence="1">
    <location>
        <position position="218"/>
    </location>
    <ligand>
        <name>1-deoxy-D-xylulose 5-phosphate</name>
        <dbReference type="ChEBI" id="CHEBI:57792"/>
    </ligand>
</feature>
<feature type="binding site" evidence="1">
    <location>
        <position position="219"/>
    </location>
    <ligand>
        <name>1-deoxy-D-xylulose 5-phosphate</name>
        <dbReference type="ChEBI" id="CHEBI:57792"/>
    </ligand>
</feature>
<feature type="binding site" evidence="1">
    <location>
        <position position="222"/>
    </location>
    <ligand>
        <name>1-deoxy-D-xylulose 5-phosphate</name>
        <dbReference type="ChEBI" id="CHEBI:57792"/>
    </ligand>
</feature>
<feature type="binding site" evidence="1">
    <location>
        <position position="222"/>
    </location>
    <ligand>
        <name>Mn(2+)</name>
        <dbReference type="ChEBI" id="CHEBI:29035"/>
    </ligand>
</feature>
<organism>
    <name type="scientific">Desulforamulus reducens (strain ATCC BAA-1160 / DSM 100696 / MI-1)</name>
    <name type="common">Desulfotomaculum reducens</name>
    <dbReference type="NCBI Taxonomy" id="349161"/>
    <lineage>
        <taxon>Bacteria</taxon>
        <taxon>Bacillati</taxon>
        <taxon>Bacillota</taxon>
        <taxon>Clostridia</taxon>
        <taxon>Eubacteriales</taxon>
        <taxon>Peptococcaceae</taxon>
        <taxon>Desulforamulus</taxon>
    </lineage>
</organism>
<protein>
    <recommendedName>
        <fullName evidence="1">1-deoxy-D-xylulose 5-phosphate reductoisomerase</fullName>
        <shortName evidence="1">DXP reductoisomerase</shortName>
        <ecNumber evidence="1">1.1.1.267</ecNumber>
    </recommendedName>
    <alternativeName>
        <fullName evidence="1">1-deoxyxylulose-5-phosphate reductoisomerase</fullName>
    </alternativeName>
    <alternativeName>
        <fullName evidence="1">2-C-methyl-D-erythritol 4-phosphate synthase</fullName>
    </alternativeName>
</protein>
<comment type="function">
    <text evidence="1">Catalyzes the NADPH-dependent rearrangement and reduction of 1-deoxy-D-xylulose-5-phosphate (DXP) to 2-C-methyl-D-erythritol 4-phosphate (MEP).</text>
</comment>
<comment type="catalytic activity">
    <reaction evidence="1">
        <text>2-C-methyl-D-erythritol 4-phosphate + NADP(+) = 1-deoxy-D-xylulose 5-phosphate + NADPH + H(+)</text>
        <dbReference type="Rhea" id="RHEA:13717"/>
        <dbReference type="ChEBI" id="CHEBI:15378"/>
        <dbReference type="ChEBI" id="CHEBI:57783"/>
        <dbReference type="ChEBI" id="CHEBI:57792"/>
        <dbReference type="ChEBI" id="CHEBI:58262"/>
        <dbReference type="ChEBI" id="CHEBI:58349"/>
        <dbReference type="EC" id="1.1.1.267"/>
    </reaction>
    <physiologicalReaction direction="right-to-left" evidence="1">
        <dbReference type="Rhea" id="RHEA:13719"/>
    </physiologicalReaction>
</comment>
<comment type="cofactor">
    <cofactor evidence="1">
        <name>Mg(2+)</name>
        <dbReference type="ChEBI" id="CHEBI:18420"/>
    </cofactor>
    <cofactor evidence="1">
        <name>Mn(2+)</name>
        <dbReference type="ChEBI" id="CHEBI:29035"/>
    </cofactor>
</comment>
<comment type="pathway">
    <text evidence="1">Isoprenoid biosynthesis; isopentenyl diphosphate biosynthesis via DXP pathway; isopentenyl diphosphate from 1-deoxy-D-xylulose 5-phosphate: step 1/6.</text>
</comment>
<comment type="similarity">
    <text evidence="1">Belongs to the DXR family.</text>
</comment>
<keyword id="KW-0414">Isoprene biosynthesis</keyword>
<keyword id="KW-0464">Manganese</keyword>
<keyword id="KW-0479">Metal-binding</keyword>
<keyword id="KW-0521">NADP</keyword>
<keyword id="KW-0560">Oxidoreductase</keyword>
<keyword id="KW-1185">Reference proteome</keyword>
<gene>
    <name evidence="1" type="primary">dxr</name>
    <name type="ordered locus">Dred_1970</name>
</gene>
<dbReference type="EC" id="1.1.1.267" evidence="1"/>
<dbReference type="EMBL" id="CP000612">
    <property type="protein sequence ID" value="ABO50488.1"/>
    <property type="molecule type" value="Genomic_DNA"/>
</dbReference>
<dbReference type="SMR" id="A4J5Y5"/>
<dbReference type="STRING" id="349161.Dred_1970"/>
<dbReference type="KEGG" id="drm:Dred_1970"/>
<dbReference type="eggNOG" id="COG0743">
    <property type="taxonomic scope" value="Bacteria"/>
</dbReference>
<dbReference type="HOGENOM" id="CLU_035714_4_0_9"/>
<dbReference type="UniPathway" id="UPA00056">
    <property type="reaction ID" value="UER00092"/>
</dbReference>
<dbReference type="Proteomes" id="UP000001556">
    <property type="component" value="Chromosome"/>
</dbReference>
<dbReference type="GO" id="GO:0030604">
    <property type="term" value="F:1-deoxy-D-xylulose-5-phosphate reductoisomerase activity"/>
    <property type="evidence" value="ECO:0007669"/>
    <property type="project" value="UniProtKB-UniRule"/>
</dbReference>
<dbReference type="GO" id="GO:0030145">
    <property type="term" value="F:manganese ion binding"/>
    <property type="evidence" value="ECO:0007669"/>
    <property type="project" value="TreeGrafter"/>
</dbReference>
<dbReference type="GO" id="GO:0070402">
    <property type="term" value="F:NADPH binding"/>
    <property type="evidence" value="ECO:0007669"/>
    <property type="project" value="InterPro"/>
</dbReference>
<dbReference type="GO" id="GO:0051484">
    <property type="term" value="P:isopentenyl diphosphate biosynthetic process, methylerythritol 4-phosphate pathway involved in terpenoid biosynthetic process"/>
    <property type="evidence" value="ECO:0007669"/>
    <property type="project" value="TreeGrafter"/>
</dbReference>
<dbReference type="FunFam" id="3.40.50.720:FF:000045">
    <property type="entry name" value="1-deoxy-D-xylulose 5-phosphate reductoisomerase"/>
    <property type="match status" value="1"/>
</dbReference>
<dbReference type="Gene3D" id="1.10.1740.10">
    <property type="match status" value="1"/>
</dbReference>
<dbReference type="Gene3D" id="3.40.50.720">
    <property type="entry name" value="NAD(P)-binding Rossmann-like Domain"/>
    <property type="match status" value="1"/>
</dbReference>
<dbReference type="HAMAP" id="MF_00183">
    <property type="entry name" value="DXP_reductoisom"/>
    <property type="match status" value="1"/>
</dbReference>
<dbReference type="InterPro" id="IPR003821">
    <property type="entry name" value="DXP_reductoisomerase"/>
</dbReference>
<dbReference type="InterPro" id="IPR013644">
    <property type="entry name" value="DXP_reductoisomerase_C"/>
</dbReference>
<dbReference type="InterPro" id="IPR013512">
    <property type="entry name" value="DXP_reductoisomerase_N"/>
</dbReference>
<dbReference type="InterPro" id="IPR026877">
    <property type="entry name" value="DXPR_C"/>
</dbReference>
<dbReference type="InterPro" id="IPR036169">
    <property type="entry name" value="DXPR_C_sf"/>
</dbReference>
<dbReference type="InterPro" id="IPR036291">
    <property type="entry name" value="NAD(P)-bd_dom_sf"/>
</dbReference>
<dbReference type="NCBIfam" id="TIGR00243">
    <property type="entry name" value="Dxr"/>
    <property type="match status" value="1"/>
</dbReference>
<dbReference type="NCBIfam" id="NF009114">
    <property type="entry name" value="PRK12464.1"/>
    <property type="match status" value="1"/>
</dbReference>
<dbReference type="PANTHER" id="PTHR30525">
    <property type="entry name" value="1-DEOXY-D-XYLULOSE 5-PHOSPHATE REDUCTOISOMERASE"/>
    <property type="match status" value="1"/>
</dbReference>
<dbReference type="PANTHER" id="PTHR30525:SF0">
    <property type="entry name" value="1-DEOXY-D-XYLULOSE 5-PHOSPHATE REDUCTOISOMERASE, CHLOROPLASTIC"/>
    <property type="match status" value="1"/>
</dbReference>
<dbReference type="Pfam" id="PF08436">
    <property type="entry name" value="DXP_redisom_C"/>
    <property type="match status" value="1"/>
</dbReference>
<dbReference type="Pfam" id="PF02670">
    <property type="entry name" value="DXP_reductoisom"/>
    <property type="match status" value="1"/>
</dbReference>
<dbReference type="Pfam" id="PF13288">
    <property type="entry name" value="DXPR_C"/>
    <property type="match status" value="1"/>
</dbReference>
<dbReference type="PIRSF" id="PIRSF006205">
    <property type="entry name" value="Dxp_reductismrs"/>
    <property type="match status" value="1"/>
</dbReference>
<dbReference type="SUPFAM" id="SSF69055">
    <property type="entry name" value="1-deoxy-D-xylulose-5-phosphate reductoisomerase, C-terminal domain"/>
    <property type="match status" value="1"/>
</dbReference>
<dbReference type="SUPFAM" id="SSF55347">
    <property type="entry name" value="Glyceraldehyde-3-phosphate dehydrogenase-like, C-terminal domain"/>
    <property type="match status" value="1"/>
</dbReference>
<dbReference type="SUPFAM" id="SSF51735">
    <property type="entry name" value="NAD(P)-binding Rossmann-fold domains"/>
    <property type="match status" value="1"/>
</dbReference>
<evidence type="ECO:0000255" key="1">
    <source>
        <dbReference type="HAMAP-Rule" id="MF_00183"/>
    </source>
</evidence>